<accession>Q5ZZS1</accession>
<feature type="chain" id="PRO_0000224075" description="DNA-directed RNA polymerase subunit beta">
    <location>
        <begin position="1"/>
        <end position="1220"/>
    </location>
</feature>
<gene>
    <name evidence="1" type="primary">rpoB</name>
    <name type="ordered locus">mhp636</name>
</gene>
<dbReference type="EC" id="2.7.7.6" evidence="1"/>
<dbReference type="EMBL" id="AE017332">
    <property type="protein sequence ID" value="AAV28003.1"/>
    <property type="molecule type" value="Genomic_DNA"/>
</dbReference>
<dbReference type="RefSeq" id="WP_011206467.1">
    <property type="nucleotide sequence ID" value="NC_006360.1"/>
</dbReference>
<dbReference type="SMR" id="Q5ZZS1"/>
<dbReference type="KEGG" id="mhy:mhp636"/>
<dbReference type="eggNOG" id="COG0085">
    <property type="taxonomic scope" value="Bacteria"/>
</dbReference>
<dbReference type="HOGENOM" id="CLU_000524_4_1_14"/>
<dbReference type="PhylomeDB" id="Q5ZZS1"/>
<dbReference type="Proteomes" id="UP000006822">
    <property type="component" value="Chromosome"/>
</dbReference>
<dbReference type="GO" id="GO:0000428">
    <property type="term" value="C:DNA-directed RNA polymerase complex"/>
    <property type="evidence" value="ECO:0007669"/>
    <property type="project" value="UniProtKB-KW"/>
</dbReference>
<dbReference type="GO" id="GO:0003677">
    <property type="term" value="F:DNA binding"/>
    <property type="evidence" value="ECO:0007669"/>
    <property type="project" value="UniProtKB-UniRule"/>
</dbReference>
<dbReference type="GO" id="GO:0003899">
    <property type="term" value="F:DNA-directed RNA polymerase activity"/>
    <property type="evidence" value="ECO:0007669"/>
    <property type="project" value="UniProtKB-UniRule"/>
</dbReference>
<dbReference type="GO" id="GO:0032549">
    <property type="term" value="F:ribonucleoside binding"/>
    <property type="evidence" value="ECO:0007669"/>
    <property type="project" value="InterPro"/>
</dbReference>
<dbReference type="GO" id="GO:0006351">
    <property type="term" value="P:DNA-templated transcription"/>
    <property type="evidence" value="ECO:0007669"/>
    <property type="project" value="UniProtKB-UniRule"/>
</dbReference>
<dbReference type="CDD" id="cd12797">
    <property type="entry name" value="M23_peptidase"/>
    <property type="match status" value="1"/>
</dbReference>
<dbReference type="CDD" id="cd00653">
    <property type="entry name" value="RNA_pol_B_RPB2"/>
    <property type="match status" value="1"/>
</dbReference>
<dbReference type="Gene3D" id="2.40.50.100">
    <property type="match status" value="1"/>
</dbReference>
<dbReference type="Gene3D" id="2.40.50.150">
    <property type="match status" value="1"/>
</dbReference>
<dbReference type="Gene3D" id="3.90.1100.10">
    <property type="match status" value="2"/>
</dbReference>
<dbReference type="Gene3D" id="2.30.150.10">
    <property type="entry name" value="DNA-directed RNA polymerase, beta subunit, external 1 domain"/>
    <property type="match status" value="1"/>
</dbReference>
<dbReference type="Gene3D" id="2.40.270.10">
    <property type="entry name" value="DNA-directed RNA polymerase, subunit 2, domain 6"/>
    <property type="match status" value="2"/>
</dbReference>
<dbReference type="Gene3D" id="3.90.1800.10">
    <property type="entry name" value="RNA polymerase alpha subunit dimerisation domain"/>
    <property type="match status" value="1"/>
</dbReference>
<dbReference type="Gene3D" id="3.90.1110.10">
    <property type="entry name" value="RNA polymerase Rpb2, domain 2"/>
    <property type="match status" value="2"/>
</dbReference>
<dbReference type="HAMAP" id="MF_01321">
    <property type="entry name" value="RNApol_bact_RpoB"/>
    <property type="match status" value="1"/>
</dbReference>
<dbReference type="InterPro" id="IPR042107">
    <property type="entry name" value="DNA-dir_RNA_pol_bsu_ext_1_sf"/>
</dbReference>
<dbReference type="InterPro" id="IPR019462">
    <property type="entry name" value="DNA-dir_RNA_pol_bsu_external_1"/>
</dbReference>
<dbReference type="InterPro" id="IPR015712">
    <property type="entry name" value="DNA-dir_RNA_pol_su2"/>
</dbReference>
<dbReference type="InterPro" id="IPR007120">
    <property type="entry name" value="DNA-dir_RNAP_su2_dom"/>
</dbReference>
<dbReference type="InterPro" id="IPR037033">
    <property type="entry name" value="DNA-dir_RNAP_su2_hyb_sf"/>
</dbReference>
<dbReference type="InterPro" id="IPR010243">
    <property type="entry name" value="RNA_pol_bsu_bac"/>
</dbReference>
<dbReference type="InterPro" id="IPR007121">
    <property type="entry name" value="RNA_pol_bsu_CS"/>
</dbReference>
<dbReference type="InterPro" id="IPR007644">
    <property type="entry name" value="RNA_pol_bsu_protrusion"/>
</dbReference>
<dbReference type="InterPro" id="IPR007642">
    <property type="entry name" value="RNA_pol_Rpb2_2"/>
</dbReference>
<dbReference type="InterPro" id="IPR037034">
    <property type="entry name" value="RNA_pol_Rpb2_2_sf"/>
</dbReference>
<dbReference type="InterPro" id="IPR007645">
    <property type="entry name" value="RNA_pol_Rpb2_3"/>
</dbReference>
<dbReference type="InterPro" id="IPR007641">
    <property type="entry name" value="RNA_pol_Rpb2_7"/>
</dbReference>
<dbReference type="InterPro" id="IPR014724">
    <property type="entry name" value="RNA_pol_RPB2_OB-fold"/>
</dbReference>
<dbReference type="NCBIfam" id="NF001616">
    <property type="entry name" value="PRK00405.1"/>
    <property type="match status" value="1"/>
</dbReference>
<dbReference type="PANTHER" id="PTHR20856">
    <property type="entry name" value="DNA-DIRECTED RNA POLYMERASE I SUBUNIT 2"/>
    <property type="match status" value="1"/>
</dbReference>
<dbReference type="Pfam" id="PF04563">
    <property type="entry name" value="RNA_pol_Rpb2_1"/>
    <property type="match status" value="1"/>
</dbReference>
<dbReference type="Pfam" id="PF04561">
    <property type="entry name" value="RNA_pol_Rpb2_2"/>
    <property type="match status" value="1"/>
</dbReference>
<dbReference type="Pfam" id="PF04565">
    <property type="entry name" value="RNA_pol_Rpb2_3"/>
    <property type="match status" value="1"/>
</dbReference>
<dbReference type="Pfam" id="PF10385">
    <property type="entry name" value="RNA_pol_Rpb2_45"/>
    <property type="match status" value="1"/>
</dbReference>
<dbReference type="Pfam" id="PF00562">
    <property type="entry name" value="RNA_pol_Rpb2_6"/>
    <property type="match status" value="1"/>
</dbReference>
<dbReference type="Pfam" id="PF04560">
    <property type="entry name" value="RNA_pol_Rpb2_7"/>
    <property type="match status" value="1"/>
</dbReference>
<dbReference type="SUPFAM" id="SSF64484">
    <property type="entry name" value="beta and beta-prime subunits of DNA dependent RNA-polymerase"/>
    <property type="match status" value="1"/>
</dbReference>
<dbReference type="PROSITE" id="PS01166">
    <property type="entry name" value="RNA_POL_BETA"/>
    <property type="match status" value="1"/>
</dbReference>
<keyword id="KW-0240">DNA-directed RNA polymerase</keyword>
<keyword id="KW-0548">Nucleotidyltransferase</keyword>
<keyword id="KW-0804">Transcription</keyword>
<keyword id="KW-0808">Transferase</keyword>
<name>RPOB_MESH2</name>
<organism>
    <name type="scientific">Mesomycoplasma hyopneumoniae (strain 232)</name>
    <name type="common">Mycoplasma hyopneumoniae</name>
    <dbReference type="NCBI Taxonomy" id="295358"/>
    <lineage>
        <taxon>Bacteria</taxon>
        <taxon>Bacillati</taxon>
        <taxon>Mycoplasmatota</taxon>
        <taxon>Mycoplasmoidales</taxon>
        <taxon>Metamycoplasmataceae</taxon>
        <taxon>Mesomycoplasma</taxon>
    </lineage>
</organism>
<reference key="1">
    <citation type="journal article" date="2004" name="J. Bacteriol.">
        <title>The genome sequence of Mycoplasma hyopneumoniae strain 232, the agent of swine mycoplasmosis.</title>
        <authorList>
            <person name="Minion F.C."/>
            <person name="Lefkowitz E.J."/>
            <person name="Madsen M.L."/>
            <person name="Cleary B.J."/>
            <person name="Swartzell S.M."/>
            <person name="Mahairas G.G."/>
        </authorList>
    </citation>
    <scope>NUCLEOTIDE SEQUENCE [LARGE SCALE GENOMIC DNA]</scope>
    <source>
        <strain>232</strain>
    </source>
</reference>
<protein>
    <recommendedName>
        <fullName evidence="1">DNA-directed RNA polymerase subunit beta</fullName>
        <shortName evidence="1">RNAP subunit beta</shortName>
        <ecNumber evidence="1">2.7.7.6</ecNumber>
    </recommendedName>
    <alternativeName>
        <fullName evidence="1">RNA polymerase subunit beta</fullName>
    </alternativeName>
    <alternativeName>
        <fullName evidence="1">Transcriptase subunit beta</fullName>
    </alternativeName>
</protein>
<sequence>MNHIYKLKSYGIGTDRRFYGVANKTLETPDFLDPVRESFDWFLHVGIPEAFDRIFPIVSANGKLEISFRRGSLRVEKPENEYLAIREAKIKGKTYSARVYVTLVKVHSEDGEMEEQEILLAEFPFMTQGGTFIINGFEKVVVSQLIRSPGVCFRENVRNQQADDLFNKVEIIPQLGSWMEIFHKVTGNQVDTVKFRIDKHKNIPLLSFLRAIGFTNETVRKYFGNSPELLESIRRHKLESLEENLELIYRIVRKDDRITEEGLKNLIPSIIFNERRYNLASTGRFMLNAKLNLVERISQTYLAEDLVSKKNKILFKKGTYITRQLALEIQEKFNNEEIPLSEIEGVDSTIYARQLEITRNENLWKRFYVAIVKVWPNKKSMLQESEPVNVIATDPNLNEKTLVLSDIIAIVSYYFNLLSNLGKSDDPDSLVNKRIVSVGELLQNQFLIALTKIEKNSKEKISTKSDLSQLTVKSIINNKPIYNQFKNFFNSSKLSQFMDQINPLGEMASKRKVTSLGPGGLNRDTAQFEVRDVHTTHYGRICPVETPEGQNIGLILNFSVFSRINQYGFIITPYYQVKNRIVDYSKVHWLAASEEFDKSFAQSGVEIDQNNRIIPDKLTVRKNQTYLVLDAEQVNYIDVSSMQMTSISASAIPFLENNDANRALMGSNMQRQAVPLIKSEAPLVATGIEEAVARFSATNLRAAISGKVTYVDAKKIIIDDGEKPEIHYLRYFEKSNQETLILQKPTVKVGDKVKKGQLICDGPSTDNGELALGKNVLVAFSTWYGYNYEDAIIISEKLVKDDVFTSIHIQEQTIKFRSTKAGNDILTAEIPNASAKSRLHLDANGIVIVGSEVDTGDILVGRTSPKGEDNPTAEEKLMAAIWGKKALAQKDTSLRVKNGEGGTVIDVQILSRDQGDNLEEGVGMLIKILIAQKRKIKVGDKMAGRHGNKGVVSVILPVEDMPFLEDGTPVDIVLNPQGVPSRMNIGQVLELHLGMVAKKLKTKFVTPVFDGIKIETIKKLFDEANIPESGKFKLFDGISGQAFENPVSVGYMYMLKLLHMVDDKMHARSIGPYSLTTQQPLGGKSQNGGQRFGEMETWALESFGATSVLSELLTYKSDNIQGRNLLYNNIISGGKIPSPGTPESFNVLAYELRGLLIKLEVHKNDQENQEGEEIKDPLELPEIPSNFIDEYNQDGRIELNKLEEFADFDEENIDFDKLTR</sequence>
<proteinExistence type="inferred from homology"/>
<comment type="function">
    <text evidence="1">DNA-dependent RNA polymerase catalyzes the transcription of DNA into RNA using the four ribonucleoside triphosphates as substrates.</text>
</comment>
<comment type="catalytic activity">
    <reaction evidence="1">
        <text>RNA(n) + a ribonucleoside 5'-triphosphate = RNA(n+1) + diphosphate</text>
        <dbReference type="Rhea" id="RHEA:21248"/>
        <dbReference type="Rhea" id="RHEA-COMP:14527"/>
        <dbReference type="Rhea" id="RHEA-COMP:17342"/>
        <dbReference type="ChEBI" id="CHEBI:33019"/>
        <dbReference type="ChEBI" id="CHEBI:61557"/>
        <dbReference type="ChEBI" id="CHEBI:140395"/>
        <dbReference type="EC" id="2.7.7.6"/>
    </reaction>
</comment>
<comment type="subunit">
    <text evidence="1">The RNAP catalytic core consists of 2 alpha, 1 beta, 1 beta' and 1 omega subunit. When a sigma factor is associated with the core the holoenzyme is formed, which can initiate transcription.</text>
</comment>
<comment type="similarity">
    <text evidence="1">Belongs to the RNA polymerase beta chain family.</text>
</comment>
<evidence type="ECO:0000255" key="1">
    <source>
        <dbReference type="HAMAP-Rule" id="MF_01321"/>
    </source>
</evidence>